<sequence>MIQISDKAQTYFRKLIEREGVPGMGVRLSAVDAGTPRADARLEFAEPADLSGDEWAIDCDGFTLYVVAASVPWMDGAEIDYVTQSTGNQQLTIKAPKIKGEAPAESASMVERVRWVVENEINPQLASHGGRVAVQEVSADGVVLLRFGGGCHGCGMADVTLKQGIEKTLMGRVPGVIAVRDATDHATGDAPYIPRDSAA</sequence>
<protein>
    <recommendedName>
        <fullName evidence="1">Fe/S biogenesis protein NfuA</fullName>
    </recommendedName>
</protein>
<reference key="1">
    <citation type="journal article" date="2005" name="Jpn. Agric. Res. Q.">
        <title>Genome sequence of Xanthomonas oryzae pv. oryzae suggests contribution of large numbers of effector genes and insertion sequences to its race diversity.</title>
        <authorList>
            <person name="Ochiai H."/>
            <person name="Inoue Y."/>
            <person name="Takeya M."/>
            <person name="Sasaki A."/>
            <person name="Kaku H."/>
        </authorList>
    </citation>
    <scope>NUCLEOTIDE SEQUENCE [LARGE SCALE GENOMIC DNA]</scope>
    <source>
        <strain>MAFF 311018</strain>
    </source>
</reference>
<proteinExistence type="inferred from homology"/>
<accession>Q2P1A3</accession>
<dbReference type="EMBL" id="AP008229">
    <property type="protein sequence ID" value="BAE69674.1"/>
    <property type="molecule type" value="Genomic_DNA"/>
</dbReference>
<dbReference type="RefSeq" id="WP_011408965.1">
    <property type="nucleotide sequence ID" value="NC_007705.1"/>
</dbReference>
<dbReference type="SMR" id="Q2P1A3"/>
<dbReference type="KEGG" id="xom:XOO2919"/>
<dbReference type="HOGENOM" id="CLU_094569_0_0_6"/>
<dbReference type="GO" id="GO:0051539">
    <property type="term" value="F:4 iron, 4 sulfur cluster binding"/>
    <property type="evidence" value="ECO:0007669"/>
    <property type="project" value="UniProtKB-UniRule"/>
</dbReference>
<dbReference type="GO" id="GO:0005506">
    <property type="term" value="F:iron ion binding"/>
    <property type="evidence" value="ECO:0007669"/>
    <property type="project" value="InterPro"/>
</dbReference>
<dbReference type="GO" id="GO:0016226">
    <property type="term" value="P:iron-sulfur cluster assembly"/>
    <property type="evidence" value="ECO:0007669"/>
    <property type="project" value="UniProtKB-UniRule"/>
</dbReference>
<dbReference type="GO" id="GO:0051604">
    <property type="term" value="P:protein maturation"/>
    <property type="evidence" value="ECO:0007669"/>
    <property type="project" value="UniProtKB-UniRule"/>
</dbReference>
<dbReference type="Gene3D" id="3.30.300.130">
    <property type="entry name" value="Fe-S cluster assembly (FSCA)"/>
    <property type="match status" value="1"/>
</dbReference>
<dbReference type="Gene3D" id="2.60.300.12">
    <property type="entry name" value="HesB-like domain"/>
    <property type="match status" value="1"/>
</dbReference>
<dbReference type="HAMAP" id="MF_01637">
    <property type="entry name" value="Fe_S_biogen_NfuA"/>
    <property type="match status" value="1"/>
</dbReference>
<dbReference type="InterPro" id="IPR017726">
    <property type="entry name" value="Fe/S_biogenesis_protein_NfuA"/>
</dbReference>
<dbReference type="InterPro" id="IPR034904">
    <property type="entry name" value="FSCA_dom_sf"/>
</dbReference>
<dbReference type="InterPro" id="IPR035903">
    <property type="entry name" value="HesB-like_dom_sf"/>
</dbReference>
<dbReference type="InterPro" id="IPR001075">
    <property type="entry name" value="NIF_FeS_clus_asmbl_NifU_C"/>
</dbReference>
<dbReference type="PANTHER" id="PTHR11178:SF51">
    <property type="entry name" value="FE_S BIOGENESIS PROTEIN NFUA"/>
    <property type="match status" value="1"/>
</dbReference>
<dbReference type="PANTHER" id="PTHR11178">
    <property type="entry name" value="IRON-SULFUR CLUSTER SCAFFOLD PROTEIN NFU-RELATED"/>
    <property type="match status" value="1"/>
</dbReference>
<dbReference type="Pfam" id="PF01106">
    <property type="entry name" value="NifU"/>
    <property type="match status" value="1"/>
</dbReference>
<dbReference type="SUPFAM" id="SSF117916">
    <property type="entry name" value="Fe-S cluster assembly (FSCA) domain-like"/>
    <property type="match status" value="1"/>
</dbReference>
<dbReference type="SUPFAM" id="SSF89360">
    <property type="entry name" value="HesB-like domain"/>
    <property type="match status" value="1"/>
</dbReference>
<comment type="function">
    <text evidence="1">Involved in iron-sulfur cluster biogenesis. Binds a 4Fe-4S cluster, can transfer this cluster to apoproteins, and thereby intervenes in the maturation of Fe/S proteins. Could also act as a scaffold/chaperone for damaged Fe/S proteins.</text>
</comment>
<comment type="cofactor">
    <cofactor evidence="1">
        <name>[4Fe-4S] cluster</name>
        <dbReference type="ChEBI" id="CHEBI:49883"/>
    </cofactor>
    <text evidence="1">Binds 1 [4Fe-4S] cluster per subunit. The cluster is presumably bound at the interface of two monomers.</text>
</comment>
<comment type="subunit">
    <text evidence="1">Homodimer.</text>
</comment>
<comment type="similarity">
    <text evidence="1">Belongs to the NfuA family.</text>
</comment>
<name>NFUA_XANOM</name>
<gene>
    <name evidence="1" type="primary">nfuA</name>
    <name type="ordered locus">XOO2919</name>
</gene>
<feature type="chain" id="PRO_1000186791" description="Fe/S biogenesis protein NfuA">
    <location>
        <begin position="1"/>
        <end position="199"/>
    </location>
</feature>
<feature type="binding site" evidence="1">
    <location>
        <position position="151"/>
    </location>
    <ligand>
        <name>[4Fe-4S] cluster</name>
        <dbReference type="ChEBI" id="CHEBI:49883"/>
    </ligand>
</feature>
<feature type="binding site" evidence="1">
    <location>
        <position position="154"/>
    </location>
    <ligand>
        <name>[4Fe-4S] cluster</name>
        <dbReference type="ChEBI" id="CHEBI:49883"/>
    </ligand>
</feature>
<evidence type="ECO:0000255" key="1">
    <source>
        <dbReference type="HAMAP-Rule" id="MF_01637"/>
    </source>
</evidence>
<organism>
    <name type="scientific">Xanthomonas oryzae pv. oryzae (strain MAFF 311018)</name>
    <dbReference type="NCBI Taxonomy" id="342109"/>
    <lineage>
        <taxon>Bacteria</taxon>
        <taxon>Pseudomonadati</taxon>
        <taxon>Pseudomonadota</taxon>
        <taxon>Gammaproteobacteria</taxon>
        <taxon>Lysobacterales</taxon>
        <taxon>Lysobacteraceae</taxon>
        <taxon>Xanthomonas</taxon>
    </lineage>
</organism>
<keyword id="KW-0004">4Fe-4S</keyword>
<keyword id="KW-0408">Iron</keyword>
<keyword id="KW-0411">Iron-sulfur</keyword>
<keyword id="KW-0479">Metal-binding</keyword>